<protein>
    <recommendedName>
        <fullName>GDP-mannose transporter 2</fullName>
        <shortName>GMT 2</shortName>
    </recommendedName>
</protein>
<feature type="chain" id="PRO_0000333530" description="GDP-mannose transporter 2">
    <location>
        <begin position="1"/>
        <end position="357"/>
    </location>
</feature>
<feature type="topological domain" description="Cytoplasmic" evidence="1">
    <location>
        <begin position="1"/>
        <end position="33"/>
    </location>
</feature>
<feature type="transmembrane region" description="Helical" evidence="2">
    <location>
        <begin position="34"/>
        <end position="54"/>
    </location>
</feature>
<feature type="topological domain" description="Lumenal" evidence="1">
    <location>
        <begin position="55"/>
        <end position="68"/>
    </location>
</feature>
<feature type="transmembrane region" description="Helical" evidence="2">
    <location>
        <begin position="69"/>
        <end position="89"/>
    </location>
</feature>
<feature type="topological domain" description="Cytoplasmic" evidence="1">
    <location>
        <begin position="90"/>
        <end position="107"/>
    </location>
</feature>
<feature type="transmembrane region" description="Helical" evidence="2">
    <location>
        <begin position="108"/>
        <end position="128"/>
    </location>
</feature>
<feature type="topological domain" description="Lumenal" evidence="1">
    <location>
        <position position="129"/>
    </location>
</feature>
<feature type="transmembrane region" description="Helical" evidence="2">
    <location>
        <begin position="130"/>
        <end position="150"/>
    </location>
</feature>
<feature type="topological domain" description="Cytoplasmic" evidence="1">
    <location>
        <begin position="151"/>
        <end position="161"/>
    </location>
</feature>
<feature type="transmembrane region" description="Helical" evidence="2">
    <location>
        <begin position="162"/>
        <end position="181"/>
    </location>
</feature>
<feature type="topological domain" description="Lumenal" evidence="1">
    <location>
        <begin position="182"/>
        <end position="196"/>
    </location>
</feature>
<feature type="transmembrane region" description="Helical" evidence="2">
    <location>
        <begin position="197"/>
        <end position="217"/>
    </location>
</feature>
<feature type="topological domain" description="Cytoplasmic" evidence="1">
    <location>
        <begin position="218"/>
        <end position="236"/>
    </location>
</feature>
<feature type="transmembrane region" description="Helical" evidence="2">
    <location>
        <begin position="237"/>
        <end position="257"/>
    </location>
</feature>
<feature type="topological domain" description="Lumenal" evidence="1">
    <location>
        <begin position="258"/>
        <end position="277"/>
    </location>
</feature>
<feature type="transmembrane region" description="Helical" evidence="2">
    <location>
        <begin position="278"/>
        <end position="298"/>
    </location>
</feature>
<feature type="topological domain" description="Cytoplasmic" evidence="1">
    <location>
        <begin position="299"/>
        <end position="306"/>
    </location>
</feature>
<feature type="transmembrane region" description="Helical" evidence="2">
    <location>
        <begin position="307"/>
        <end position="327"/>
    </location>
</feature>
<feature type="topological domain" description="Lumenal" evidence="1">
    <location>
        <begin position="328"/>
        <end position="332"/>
    </location>
</feature>
<feature type="transmembrane region" description="Helical" evidence="2">
    <location>
        <begin position="333"/>
        <end position="352"/>
    </location>
</feature>
<feature type="topological domain" description="Cytoplasmic" evidence="1">
    <location>
        <begin position="353"/>
        <end position="357"/>
    </location>
</feature>
<feature type="glycosylation site" description="N-linked (GlcNAc...) asparagine" evidence="2">
    <location>
        <position position="184"/>
    </location>
</feature>
<evidence type="ECO:0000250" key="1"/>
<evidence type="ECO:0000255" key="2"/>
<evidence type="ECO:0000305" key="3"/>
<sequence>MASARNGVSKDELLPVYERRSQRDGDISGSVKSFASTIGNSASAAVLAYCLSSISMTLVNKYVVSGASWNLSFLYLAMQSFIGTVAILACKKTGLIQNLALFDLKKAQTWLPISLLLVGMIYTGNKALQFLSVPVYTIFKNLTIIVIAYGEVLMVGGGVKPLALLSFGLMVLSSVVAAWADIQNATTATVGASSDSTAAALSALNAGYAWMGTNVIFSASYALGMRRVIKKTNFDNWDVMFYNNLLSIPILLLASVLAEDWSSENLQRNFPAELRQSLFIGILYSGVAAVFISYCTAWCVRATSSTTYAMVGALNKLPLAVAGIVFFAAPVTFGSVSAIVLGFISGLVYARAKSTGA</sequence>
<organism>
    <name type="scientific">Neosartorya fischeri (strain ATCC 1020 / DSM 3700 / CBS 544.65 / FGSC A1164 / JCM 1740 / NRRL 181 / WB 181)</name>
    <name type="common">Aspergillus fischerianus</name>
    <dbReference type="NCBI Taxonomy" id="331117"/>
    <lineage>
        <taxon>Eukaryota</taxon>
        <taxon>Fungi</taxon>
        <taxon>Dikarya</taxon>
        <taxon>Ascomycota</taxon>
        <taxon>Pezizomycotina</taxon>
        <taxon>Eurotiomycetes</taxon>
        <taxon>Eurotiomycetidae</taxon>
        <taxon>Eurotiales</taxon>
        <taxon>Aspergillaceae</taxon>
        <taxon>Aspergillus</taxon>
        <taxon>Aspergillus subgen. Fumigati</taxon>
    </lineage>
</organism>
<reference key="1">
    <citation type="journal article" date="2008" name="PLoS Genet.">
        <title>Genomic islands in the pathogenic filamentous fungus Aspergillus fumigatus.</title>
        <authorList>
            <person name="Fedorova N.D."/>
            <person name="Khaldi N."/>
            <person name="Joardar V.S."/>
            <person name="Maiti R."/>
            <person name="Amedeo P."/>
            <person name="Anderson M.J."/>
            <person name="Crabtree J."/>
            <person name="Silva J.C."/>
            <person name="Badger J.H."/>
            <person name="Albarraq A."/>
            <person name="Angiuoli S."/>
            <person name="Bussey H."/>
            <person name="Bowyer P."/>
            <person name="Cotty P.J."/>
            <person name="Dyer P.S."/>
            <person name="Egan A."/>
            <person name="Galens K."/>
            <person name="Fraser-Liggett C.M."/>
            <person name="Haas B.J."/>
            <person name="Inman J.M."/>
            <person name="Kent R."/>
            <person name="Lemieux S."/>
            <person name="Malavazi I."/>
            <person name="Orvis J."/>
            <person name="Roemer T."/>
            <person name="Ronning C.M."/>
            <person name="Sundaram J.P."/>
            <person name="Sutton G."/>
            <person name="Turner G."/>
            <person name="Venter J.C."/>
            <person name="White O.R."/>
            <person name="Whitty B.R."/>
            <person name="Youngman P."/>
            <person name="Wolfe K.H."/>
            <person name="Goldman G.H."/>
            <person name="Wortman J.R."/>
            <person name="Jiang B."/>
            <person name="Denning D.W."/>
            <person name="Nierman W.C."/>
        </authorList>
    </citation>
    <scope>NUCLEOTIDE SEQUENCE [LARGE SCALE GENOMIC DNA]</scope>
    <source>
        <strain>ATCC 1020 / DSM 3700 / CBS 544.65 / FGSC A1164 / JCM 1740 / NRRL 181 / WB 181</strain>
    </source>
</reference>
<keyword id="KW-0968">Cytoplasmic vesicle</keyword>
<keyword id="KW-0256">Endoplasmic reticulum</keyword>
<keyword id="KW-0325">Glycoprotein</keyword>
<keyword id="KW-0333">Golgi apparatus</keyword>
<keyword id="KW-0472">Membrane</keyword>
<keyword id="KW-1185">Reference proteome</keyword>
<keyword id="KW-0762">Sugar transport</keyword>
<keyword id="KW-0812">Transmembrane</keyword>
<keyword id="KW-1133">Transmembrane helix</keyword>
<keyword id="KW-0813">Transport</keyword>
<name>GMT2_NEOFI</name>
<gene>
    <name type="primary">gmt2</name>
    <name type="synonym">vrg4-2</name>
    <name type="ORF">NFIA_031160</name>
</gene>
<proteinExistence type="inferred from homology"/>
<accession>A1DA52</accession>
<dbReference type="EMBL" id="DS027693">
    <property type="protein sequence ID" value="EAW20683.1"/>
    <property type="molecule type" value="Genomic_DNA"/>
</dbReference>
<dbReference type="RefSeq" id="XP_001262580.1">
    <property type="nucleotide sequence ID" value="XM_001262579.1"/>
</dbReference>
<dbReference type="SMR" id="A1DA52"/>
<dbReference type="STRING" id="331117.A1DA52"/>
<dbReference type="GlyCosmos" id="A1DA52">
    <property type="glycosylation" value="1 site, No reported glycans"/>
</dbReference>
<dbReference type="EnsemblFungi" id="EAW20683">
    <property type="protein sequence ID" value="EAW20683"/>
    <property type="gene ID" value="NFIA_031160"/>
</dbReference>
<dbReference type="GeneID" id="4588960"/>
<dbReference type="KEGG" id="nfi:NFIA_031160"/>
<dbReference type="VEuPathDB" id="FungiDB:NFIA_031160"/>
<dbReference type="eggNOG" id="KOG1444">
    <property type="taxonomic scope" value="Eukaryota"/>
</dbReference>
<dbReference type="HOGENOM" id="CLU_025360_1_2_1"/>
<dbReference type="OMA" id="WCIRKTS"/>
<dbReference type="OrthoDB" id="417037at2759"/>
<dbReference type="Proteomes" id="UP000006702">
    <property type="component" value="Unassembled WGS sequence"/>
</dbReference>
<dbReference type="GO" id="GO:0030659">
    <property type="term" value="C:cytoplasmic vesicle membrane"/>
    <property type="evidence" value="ECO:0007669"/>
    <property type="project" value="UniProtKB-SubCell"/>
</dbReference>
<dbReference type="GO" id="GO:0005789">
    <property type="term" value="C:endoplasmic reticulum membrane"/>
    <property type="evidence" value="ECO:0007669"/>
    <property type="project" value="UniProtKB-SubCell"/>
</dbReference>
<dbReference type="GO" id="GO:0000139">
    <property type="term" value="C:Golgi membrane"/>
    <property type="evidence" value="ECO:0007669"/>
    <property type="project" value="UniProtKB-SubCell"/>
</dbReference>
<dbReference type="GO" id="GO:0055085">
    <property type="term" value="P:transmembrane transport"/>
    <property type="evidence" value="ECO:0007669"/>
    <property type="project" value="InterPro"/>
</dbReference>
<dbReference type="InterPro" id="IPR013657">
    <property type="entry name" value="SCL35B1-4/HUT1"/>
</dbReference>
<dbReference type="InterPro" id="IPR050186">
    <property type="entry name" value="TPT_transporter"/>
</dbReference>
<dbReference type="NCBIfam" id="TIGR00803">
    <property type="entry name" value="nst"/>
    <property type="match status" value="1"/>
</dbReference>
<dbReference type="PANTHER" id="PTHR11132">
    <property type="entry name" value="SOLUTE CARRIER FAMILY 35"/>
    <property type="match status" value="1"/>
</dbReference>
<dbReference type="Pfam" id="PF08449">
    <property type="entry name" value="UAA"/>
    <property type="match status" value="1"/>
</dbReference>
<comment type="function">
    <text evidence="1">Involved in the import of GDP-mannose from the cytoplasm into the Golgi lumen.</text>
</comment>
<comment type="subunit">
    <text evidence="1">Homooligomer.</text>
</comment>
<comment type="subcellular location">
    <subcellularLocation>
        <location evidence="1">Golgi apparatus membrane</location>
        <topology evidence="1">Multi-pass membrane protein</topology>
    </subcellularLocation>
    <subcellularLocation>
        <location evidence="1">Cytoplasmic vesicle membrane</location>
        <topology evidence="1">Multi-pass membrane protein</topology>
    </subcellularLocation>
    <subcellularLocation>
        <location evidence="1">Endoplasmic reticulum membrane</location>
        <topology evidence="1">Multi-pass membrane protein</topology>
    </subcellularLocation>
</comment>
<comment type="similarity">
    <text evidence="3">Belongs to the TPT transporter family. SLC35D subfamily.</text>
</comment>